<proteinExistence type="inferred from homology"/>
<gene>
    <name evidence="1" type="primary">rplV</name>
    <name type="ordered locus">Csac_2282</name>
</gene>
<accession>A4XLS5</accession>
<reference key="1">
    <citation type="submission" date="2007-04" db="EMBL/GenBank/DDBJ databases">
        <title>Genome sequence of the thermophilic hydrogen-producing bacterium Caldicellulosiruptor saccharolyticus DSM 8903.</title>
        <authorList>
            <person name="Copeland A."/>
            <person name="Lucas S."/>
            <person name="Lapidus A."/>
            <person name="Barry K."/>
            <person name="Detter J.C."/>
            <person name="Glavina del Rio T."/>
            <person name="Hammon N."/>
            <person name="Israni S."/>
            <person name="Dalin E."/>
            <person name="Tice H."/>
            <person name="Pitluck S."/>
            <person name="Kiss H."/>
            <person name="Brettin T."/>
            <person name="Bruce D."/>
            <person name="Han C."/>
            <person name="Schmutz J."/>
            <person name="Larimer F."/>
            <person name="Land M."/>
            <person name="Hauser L."/>
            <person name="Kyrpides N."/>
            <person name="Lykidis A."/>
            <person name="van de Werken H.J.G."/>
            <person name="Verhaart M.R.A."/>
            <person name="VanFossen A.L."/>
            <person name="Lewis D.L."/>
            <person name="Nichols J.D."/>
            <person name="Goorissen H.P."/>
            <person name="van Niel E.W.J."/>
            <person name="Stams F.J.M."/>
            <person name="Willquist K.U."/>
            <person name="Ward D.E."/>
            <person name="van der Oost J."/>
            <person name="Kelly R.M."/>
            <person name="Kengen S.M.W."/>
            <person name="Richardson P."/>
        </authorList>
    </citation>
    <scope>NUCLEOTIDE SEQUENCE [LARGE SCALE GENOMIC DNA]</scope>
    <source>
        <strain>ATCC 43494 / DSM 8903 / Tp8T 6331</strain>
    </source>
</reference>
<keyword id="KW-0687">Ribonucleoprotein</keyword>
<keyword id="KW-0689">Ribosomal protein</keyword>
<keyword id="KW-0694">RNA-binding</keyword>
<keyword id="KW-0699">rRNA-binding</keyword>
<dbReference type="EMBL" id="CP000679">
    <property type="protein sequence ID" value="ABP67860.1"/>
    <property type="molecule type" value="Genomic_DNA"/>
</dbReference>
<dbReference type="RefSeq" id="WP_011917786.1">
    <property type="nucleotide sequence ID" value="NC_009437.1"/>
</dbReference>
<dbReference type="SMR" id="A4XLS5"/>
<dbReference type="STRING" id="351627.Csac_2282"/>
<dbReference type="KEGG" id="csc:Csac_2282"/>
<dbReference type="eggNOG" id="COG0091">
    <property type="taxonomic scope" value="Bacteria"/>
</dbReference>
<dbReference type="HOGENOM" id="CLU_083987_3_3_9"/>
<dbReference type="OrthoDB" id="9805969at2"/>
<dbReference type="Proteomes" id="UP000000256">
    <property type="component" value="Chromosome"/>
</dbReference>
<dbReference type="GO" id="GO:0022625">
    <property type="term" value="C:cytosolic large ribosomal subunit"/>
    <property type="evidence" value="ECO:0007669"/>
    <property type="project" value="TreeGrafter"/>
</dbReference>
<dbReference type="GO" id="GO:0019843">
    <property type="term" value="F:rRNA binding"/>
    <property type="evidence" value="ECO:0007669"/>
    <property type="project" value="UniProtKB-UniRule"/>
</dbReference>
<dbReference type="GO" id="GO:0003735">
    <property type="term" value="F:structural constituent of ribosome"/>
    <property type="evidence" value="ECO:0007669"/>
    <property type="project" value="InterPro"/>
</dbReference>
<dbReference type="GO" id="GO:0006412">
    <property type="term" value="P:translation"/>
    <property type="evidence" value="ECO:0007669"/>
    <property type="project" value="UniProtKB-UniRule"/>
</dbReference>
<dbReference type="CDD" id="cd00336">
    <property type="entry name" value="Ribosomal_L22"/>
    <property type="match status" value="1"/>
</dbReference>
<dbReference type="FunFam" id="3.90.470.10:FF:000011">
    <property type="entry name" value="50S ribosomal protein L22"/>
    <property type="match status" value="1"/>
</dbReference>
<dbReference type="Gene3D" id="3.90.470.10">
    <property type="entry name" value="Ribosomal protein L22/L17"/>
    <property type="match status" value="1"/>
</dbReference>
<dbReference type="HAMAP" id="MF_01331_B">
    <property type="entry name" value="Ribosomal_uL22_B"/>
    <property type="match status" value="1"/>
</dbReference>
<dbReference type="InterPro" id="IPR001063">
    <property type="entry name" value="Ribosomal_uL22"/>
</dbReference>
<dbReference type="InterPro" id="IPR005727">
    <property type="entry name" value="Ribosomal_uL22_bac/chlpt-type"/>
</dbReference>
<dbReference type="InterPro" id="IPR047867">
    <property type="entry name" value="Ribosomal_uL22_bac/org-type"/>
</dbReference>
<dbReference type="InterPro" id="IPR018260">
    <property type="entry name" value="Ribosomal_uL22_CS"/>
</dbReference>
<dbReference type="InterPro" id="IPR036394">
    <property type="entry name" value="Ribosomal_uL22_sf"/>
</dbReference>
<dbReference type="NCBIfam" id="TIGR01044">
    <property type="entry name" value="rplV_bact"/>
    <property type="match status" value="1"/>
</dbReference>
<dbReference type="PANTHER" id="PTHR13501">
    <property type="entry name" value="CHLOROPLAST 50S RIBOSOMAL PROTEIN L22-RELATED"/>
    <property type="match status" value="1"/>
</dbReference>
<dbReference type="PANTHER" id="PTHR13501:SF8">
    <property type="entry name" value="LARGE RIBOSOMAL SUBUNIT PROTEIN UL22M"/>
    <property type="match status" value="1"/>
</dbReference>
<dbReference type="Pfam" id="PF00237">
    <property type="entry name" value="Ribosomal_L22"/>
    <property type="match status" value="1"/>
</dbReference>
<dbReference type="SUPFAM" id="SSF54843">
    <property type="entry name" value="Ribosomal protein L22"/>
    <property type="match status" value="1"/>
</dbReference>
<dbReference type="PROSITE" id="PS00464">
    <property type="entry name" value="RIBOSOMAL_L22"/>
    <property type="match status" value="1"/>
</dbReference>
<sequence>MEKAVNTNTEVKKATATLRYAMISPRKVRIVIDLIRNKPVQEALNILKFIPKRGARFVEKLLKSAIANAENNHNMNVDKLYIAEIYANGGPMLKRIRPRAQGRAFLIRKRTSHITVVLKERE</sequence>
<organism>
    <name type="scientific">Caldicellulosiruptor saccharolyticus (strain ATCC 43494 / DSM 8903 / Tp8T 6331)</name>
    <dbReference type="NCBI Taxonomy" id="351627"/>
    <lineage>
        <taxon>Bacteria</taxon>
        <taxon>Bacillati</taxon>
        <taxon>Bacillota</taxon>
        <taxon>Bacillota incertae sedis</taxon>
        <taxon>Caldicellulosiruptorales</taxon>
        <taxon>Caldicellulosiruptoraceae</taxon>
        <taxon>Caldicellulosiruptor</taxon>
    </lineage>
</organism>
<protein>
    <recommendedName>
        <fullName evidence="1">Large ribosomal subunit protein uL22</fullName>
    </recommendedName>
    <alternativeName>
        <fullName evidence="2">50S ribosomal protein L22</fullName>
    </alternativeName>
</protein>
<feature type="chain" id="PRO_0000354452" description="Large ribosomal subunit protein uL22">
    <location>
        <begin position="1"/>
        <end position="122"/>
    </location>
</feature>
<comment type="function">
    <text evidence="1">This protein binds specifically to 23S rRNA; its binding is stimulated by other ribosomal proteins, e.g. L4, L17, and L20. It is important during the early stages of 50S assembly. It makes multiple contacts with different domains of the 23S rRNA in the assembled 50S subunit and ribosome (By similarity).</text>
</comment>
<comment type="function">
    <text evidence="1">The globular domain of the protein is located near the polypeptide exit tunnel on the outside of the subunit, while an extended beta-hairpin is found that lines the wall of the exit tunnel in the center of the 70S ribosome.</text>
</comment>
<comment type="subunit">
    <text evidence="1">Part of the 50S ribosomal subunit.</text>
</comment>
<comment type="similarity">
    <text evidence="1">Belongs to the universal ribosomal protein uL22 family.</text>
</comment>
<evidence type="ECO:0000255" key="1">
    <source>
        <dbReference type="HAMAP-Rule" id="MF_01331"/>
    </source>
</evidence>
<evidence type="ECO:0000305" key="2"/>
<name>RL22_CALS8</name>